<organism>
    <name type="scientific">Ictalurid herpesvirus 1 (strain Auburn)</name>
    <name type="common">IcHV-1</name>
    <name type="synonym">Channel catfish herpesvirus</name>
    <dbReference type="NCBI Taxonomy" id="766178"/>
    <lineage>
        <taxon>Viruses</taxon>
        <taxon>Duplodnaviria</taxon>
        <taxon>Heunggongvirae</taxon>
        <taxon>Peploviricota</taxon>
        <taxon>Herviviricetes</taxon>
        <taxon>Herpesvirales</taxon>
        <taxon>Alloherpesviridae</taxon>
        <taxon>Ictavirus</taxon>
        <taxon>Ictavirus ictaluridallo1</taxon>
        <taxon>Ictalurid herpesvirus 1</taxon>
    </lineage>
</organism>
<name>VG30_ICHVA</name>
<keyword id="KW-1185">Reference proteome</keyword>
<gene>
    <name type="primary">ORF30</name>
</gene>
<protein>
    <recommendedName>
        <fullName>Uncharacterized protein ORF30</fullName>
    </recommendedName>
</protein>
<organismHost>
    <name type="scientific">Ictaluridae</name>
    <name type="common">bullhead catfishes</name>
    <dbReference type="NCBI Taxonomy" id="7996"/>
</organismHost>
<sequence length="208" mass="22976">MMDIFNSVSESINILNNSVAPMDHREEHEGAPSDKPWGVNFSGHDFLVNSTSRSDIITSVEQVDRTGSCPICASKNDQGTSLAEAMESMVATRQLDSAMSFLSMVRPDLANWDVINYHFSHGIKDPIEKLEYQIDTMIDVHYRAGMAIGRDFAMMVTANGSQFVSPNEKNIKCLSSLTTGLTKLIQVRGDIRKMTTSKKNKRGTAAPL</sequence>
<accession>Q00152</accession>
<dbReference type="EMBL" id="M75136">
    <property type="protein sequence ID" value="AAA88133.1"/>
    <property type="molecule type" value="Genomic_DNA"/>
</dbReference>
<dbReference type="PIR" id="D36789">
    <property type="entry name" value="D36789"/>
</dbReference>
<dbReference type="RefSeq" id="NP_041121.1">
    <property type="nucleotide sequence ID" value="NC_001493.2"/>
</dbReference>
<dbReference type="GeneID" id="1488383"/>
<dbReference type="KEGG" id="vg:1488383"/>
<dbReference type="Proteomes" id="UP000007643">
    <property type="component" value="Segment"/>
</dbReference>
<proteinExistence type="predicted"/>
<feature type="chain" id="PRO_0000222112" description="Uncharacterized protein ORF30">
    <location>
        <begin position="1"/>
        <end position="208"/>
    </location>
</feature>
<reference key="1">
    <citation type="journal article" date="1992" name="Virology">
        <title>Channel catfish virus: a new type of herpesvirus.</title>
        <authorList>
            <person name="Davison A.J."/>
        </authorList>
    </citation>
    <scope>NUCLEOTIDE SEQUENCE [LARGE SCALE GENOMIC DNA]</scope>
</reference>